<feature type="signal peptide" evidence="1">
    <location>
        <begin position="1"/>
        <end position="24"/>
    </location>
</feature>
<feature type="chain" id="PRO_0000269214" description="Uncharacterized protein RF_0091">
    <location>
        <begin position="25"/>
        <end position="977"/>
    </location>
</feature>
<feature type="transmembrane region" description="Helical" evidence="1">
    <location>
        <begin position="612"/>
        <end position="632"/>
    </location>
</feature>
<feature type="transmembrane region" description="Helical" evidence="1">
    <location>
        <begin position="722"/>
        <end position="742"/>
    </location>
</feature>
<feature type="transmembrane region" description="Helical" evidence="1">
    <location>
        <begin position="754"/>
        <end position="774"/>
    </location>
</feature>
<feature type="transmembrane region" description="Helical" evidence="1">
    <location>
        <begin position="796"/>
        <end position="816"/>
    </location>
</feature>
<feature type="transmembrane region" description="Helical" evidence="1">
    <location>
        <begin position="833"/>
        <end position="853"/>
    </location>
</feature>
<feature type="transmembrane region" description="Helical" evidence="1">
    <location>
        <begin position="866"/>
        <end position="886"/>
    </location>
</feature>
<feature type="region of interest" description="Disordered" evidence="2">
    <location>
        <begin position="125"/>
        <end position="146"/>
    </location>
</feature>
<feature type="region of interest" description="Disordered" evidence="2">
    <location>
        <begin position="918"/>
        <end position="977"/>
    </location>
</feature>
<feature type="compositionally biased region" description="Basic and acidic residues" evidence="2">
    <location>
        <begin position="937"/>
        <end position="967"/>
    </location>
</feature>
<proteinExistence type="inferred from homology"/>
<evidence type="ECO:0000255" key="1"/>
<evidence type="ECO:0000256" key="2">
    <source>
        <dbReference type="SAM" id="MobiDB-lite"/>
    </source>
</evidence>
<evidence type="ECO:0000305" key="3"/>
<keyword id="KW-1003">Cell membrane</keyword>
<keyword id="KW-0472">Membrane</keyword>
<keyword id="KW-0732">Signal</keyword>
<keyword id="KW-0812">Transmembrane</keyword>
<keyword id="KW-1133">Transmembrane helix</keyword>
<protein>
    <recommendedName>
        <fullName>Uncharacterized protein RF_0091</fullName>
    </recommendedName>
</protein>
<gene>
    <name type="ordered locus">RF_0091</name>
</gene>
<name>Y091_RICFE</name>
<dbReference type="EMBL" id="CP000053">
    <property type="protein sequence ID" value="AAY60942.1"/>
    <property type="molecule type" value="Genomic_DNA"/>
</dbReference>
<dbReference type="STRING" id="315456.RF_0091"/>
<dbReference type="KEGG" id="rfe:RF_0091"/>
<dbReference type="eggNOG" id="COG3704">
    <property type="taxonomic scope" value="Bacteria"/>
</dbReference>
<dbReference type="HOGENOM" id="CLU_304399_0_0_5"/>
<dbReference type="OrthoDB" id="7160583at2"/>
<dbReference type="Proteomes" id="UP000008548">
    <property type="component" value="Chromosome"/>
</dbReference>
<dbReference type="GO" id="GO:0005886">
    <property type="term" value="C:plasma membrane"/>
    <property type="evidence" value="ECO:0007669"/>
    <property type="project" value="UniProtKB-SubCell"/>
</dbReference>
<dbReference type="GO" id="GO:0030255">
    <property type="term" value="P:protein secretion by the type IV secretion system"/>
    <property type="evidence" value="ECO:0007669"/>
    <property type="project" value="InterPro"/>
</dbReference>
<dbReference type="InterPro" id="IPR023298">
    <property type="entry name" value="ATPase_P-typ_TM_dom_sf"/>
</dbReference>
<dbReference type="InterPro" id="IPR007688">
    <property type="entry name" value="Conjugal_tfr_TrbL/VirB6"/>
</dbReference>
<dbReference type="Pfam" id="PF04610">
    <property type="entry name" value="TrbL"/>
    <property type="match status" value="1"/>
</dbReference>
<dbReference type="SUPFAM" id="SSF81665">
    <property type="entry name" value="Calcium ATPase, transmembrane domain M"/>
    <property type="match status" value="1"/>
</dbReference>
<accession>Q4UNB6</accession>
<organism>
    <name type="scientific">Rickettsia felis (strain ATCC VR-1525 / URRWXCal2)</name>
    <name type="common">Rickettsia azadi</name>
    <dbReference type="NCBI Taxonomy" id="315456"/>
    <lineage>
        <taxon>Bacteria</taxon>
        <taxon>Pseudomonadati</taxon>
        <taxon>Pseudomonadota</taxon>
        <taxon>Alphaproteobacteria</taxon>
        <taxon>Rickettsiales</taxon>
        <taxon>Rickettsiaceae</taxon>
        <taxon>Rickettsieae</taxon>
        <taxon>Rickettsia</taxon>
        <taxon>spotted fever group</taxon>
    </lineage>
</organism>
<comment type="subcellular location">
    <subcellularLocation>
        <location evidence="3">Cell membrane</location>
        <topology evidence="3">Multi-pass membrane protein</topology>
    </subcellularLocation>
</comment>
<comment type="similarity">
    <text evidence="3">Belongs to the TrbL/VirB6 family.</text>
</comment>
<sequence length="977" mass="108498">MQSNLLKVLGVLAIVATLVCFIFAALGMIGAVKVGDGCYMRYAPDGKGGSDSITGTITLNANANYVNTSKMLPDGTTQLIPDPNRYGEWLNTQVLVENNQPVNLQVVGQVSLCLAYVPKDNVQFTESTRPGKSNLDDKGNMIPIPRITDANNPPLSLIMDAKNNEWRNIAELYANDRVLVSVSPNFANTDATVEDAFKGTKVTKNCSQGQTSYEPICGKYSVYHGEYVNDCEWRDKYWKCNYHHSCDTSFWGGCGLGCPCAFGKICCGEWICDSCGAWVNIRTSMPEAYKDDGSVTKAWSDNINNLFFDLFNLECSNNSKTLPNGQCPDAVRDRSPKNLDFIKGRCSGTWVEDQCNDGTVSTPELSNYKYFWYTADGKGGKGPTGLIYQMNDAGSVSQALPSKLEFAKFVADTDQPADYKDKDGKYLYKVIYNIPFNSNTEKSYLQYRLWSPTSQDASKNTGGYVLNIKQTKCYRENGNSFNDTFDDRGRVQYIIVKPSENPNTSGKTYSPQGINVNSDGKYNFNANEAGYIWMKILNDPSNNLRDYKDSEGNYKVHFSTSLKVGSFTIKVMNPLLELFKTKVQGAATSIFKNMVCYKANDSSSCTNFFTYIKAILILYVMTYGAMFLLGFAKINQKELVTRIAKIGVVSGLMNGNTFEFFNNYLFDAITNFSDAIIANMSGYSLYTSTNTISNPFMFLDAVMSKIFFSQTFIAQLLSLLSLGLSGIIYFIITFIAVGIVIITALRAVAVYIMAFMATCILIGIAPLFISFLLFDFTRYLFDNWVRFTIRYMIEPVVMMAGIIVLTQLFTIYLDFVLGYSVCWKCALPIKIPFIGTILPIALLNVPIFCINWFAPWGMDYMSGMMGVNMQNIVALVIIAYGMYGYVEFSGRMVAKLTSAAGPSATEIGGRMSHDAGQKALSPIGMDDKTRQGITGRAEARLKQRNKTLDQAEKNRKNTPKEGGEKTNAEPPQPEARG</sequence>
<reference key="1">
    <citation type="journal article" date="2005" name="PLoS Biol.">
        <title>The genome sequence of Rickettsia felis identifies the first putative conjugative plasmid in an obligate intracellular parasite.</title>
        <authorList>
            <person name="Ogata H."/>
            <person name="Renesto P."/>
            <person name="Audic S."/>
            <person name="Robert C."/>
            <person name="Blanc G."/>
            <person name="Fournier P.-E."/>
            <person name="Parinello H."/>
            <person name="Claverie J.-M."/>
            <person name="Raoult D."/>
        </authorList>
    </citation>
    <scope>NUCLEOTIDE SEQUENCE [LARGE SCALE GENOMIC DNA]</scope>
    <source>
        <strain>ATCC VR-1525 / URRWXCal2</strain>
    </source>
</reference>